<organism>
    <name type="scientific">Petrotoga mobilis (strain DSM 10674 / SJ95)</name>
    <dbReference type="NCBI Taxonomy" id="403833"/>
    <lineage>
        <taxon>Bacteria</taxon>
        <taxon>Thermotogati</taxon>
        <taxon>Thermotogota</taxon>
        <taxon>Thermotogae</taxon>
        <taxon>Petrotogales</taxon>
        <taxon>Petrotogaceae</taxon>
        <taxon>Petrotoga</taxon>
    </lineage>
</organism>
<comment type="function">
    <text evidence="1">Catalyzes the attachment of isoleucine to tRNA(Ile). As IleRS can inadvertently accommodate and process structurally similar amino acids such as valine, to avoid such errors it has two additional distinct tRNA(Ile)-dependent editing activities. One activity is designated as 'pretransfer' editing and involves the hydrolysis of activated Val-AMP. The other activity is designated 'posttransfer' editing and involves deacylation of mischarged Val-tRNA(Ile).</text>
</comment>
<comment type="catalytic activity">
    <reaction evidence="1">
        <text>tRNA(Ile) + L-isoleucine + ATP = L-isoleucyl-tRNA(Ile) + AMP + diphosphate</text>
        <dbReference type="Rhea" id="RHEA:11060"/>
        <dbReference type="Rhea" id="RHEA-COMP:9666"/>
        <dbReference type="Rhea" id="RHEA-COMP:9695"/>
        <dbReference type="ChEBI" id="CHEBI:30616"/>
        <dbReference type="ChEBI" id="CHEBI:33019"/>
        <dbReference type="ChEBI" id="CHEBI:58045"/>
        <dbReference type="ChEBI" id="CHEBI:78442"/>
        <dbReference type="ChEBI" id="CHEBI:78528"/>
        <dbReference type="ChEBI" id="CHEBI:456215"/>
        <dbReference type="EC" id="6.1.1.5"/>
    </reaction>
</comment>
<comment type="cofactor">
    <cofactor evidence="1">
        <name>Zn(2+)</name>
        <dbReference type="ChEBI" id="CHEBI:29105"/>
    </cofactor>
    <text evidence="1">Binds 1 zinc ion per subunit.</text>
</comment>
<comment type="subunit">
    <text evidence="1">Monomer.</text>
</comment>
<comment type="subcellular location">
    <subcellularLocation>
        <location evidence="1">Cytoplasm</location>
    </subcellularLocation>
</comment>
<comment type="domain">
    <text evidence="1">IleRS has two distinct active sites: one for aminoacylation and one for editing. The misactivated valine is translocated from the active site to the editing site, which sterically excludes the correctly activated isoleucine. The single editing site contains two valyl binding pockets, one specific for each substrate (Val-AMP or Val-tRNA(Ile)).</text>
</comment>
<comment type="similarity">
    <text evidence="1">Belongs to the class-I aminoacyl-tRNA synthetase family. IleS type 1 subfamily.</text>
</comment>
<proteinExistence type="inferred from homology"/>
<reference key="1">
    <citation type="submission" date="2007-11" db="EMBL/GenBank/DDBJ databases">
        <title>Complete sequence of Petroga mobilis SJ95.</title>
        <authorList>
            <consortium name="US DOE Joint Genome Institute"/>
            <person name="Copeland A."/>
            <person name="Lucas S."/>
            <person name="Lapidus A."/>
            <person name="Barry K."/>
            <person name="Glavina del Rio T."/>
            <person name="Dalin E."/>
            <person name="Tice H."/>
            <person name="Pitluck S."/>
            <person name="Meincke L."/>
            <person name="Brettin T."/>
            <person name="Bruce D."/>
            <person name="Detter J.C."/>
            <person name="Han C."/>
            <person name="Kuske C.R."/>
            <person name="Schmutz J."/>
            <person name="Larimer F."/>
            <person name="Land M."/>
            <person name="Hauser L."/>
            <person name="Kyrpides N."/>
            <person name="Mikhailova N."/>
            <person name="Noll K."/>
            <person name="Richardson P."/>
        </authorList>
    </citation>
    <scope>NUCLEOTIDE SEQUENCE [LARGE SCALE GENOMIC DNA]</scope>
    <source>
        <strain>DSM 10674 / SJ95</strain>
    </source>
</reference>
<keyword id="KW-0030">Aminoacyl-tRNA synthetase</keyword>
<keyword id="KW-0067">ATP-binding</keyword>
<keyword id="KW-0963">Cytoplasm</keyword>
<keyword id="KW-0436">Ligase</keyword>
<keyword id="KW-0479">Metal-binding</keyword>
<keyword id="KW-0547">Nucleotide-binding</keyword>
<keyword id="KW-0648">Protein biosynthesis</keyword>
<keyword id="KW-0862">Zinc</keyword>
<gene>
    <name evidence="1" type="primary">ileS</name>
    <name type="ordered locus">Pmob_1626</name>
</gene>
<name>SYI_PETMO</name>
<accession>A9BI29</accession>
<protein>
    <recommendedName>
        <fullName evidence="1">Isoleucine--tRNA ligase</fullName>
        <ecNumber evidence="1">6.1.1.5</ecNumber>
    </recommendedName>
    <alternativeName>
        <fullName evidence="1">Isoleucyl-tRNA synthetase</fullName>
        <shortName evidence="1">IleRS</shortName>
    </alternativeName>
</protein>
<feature type="chain" id="PRO_1000088551" description="Isoleucine--tRNA ligase">
    <location>
        <begin position="1"/>
        <end position="919"/>
    </location>
</feature>
<feature type="short sequence motif" description="'HIGH' region">
    <location>
        <begin position="57"/>
        <end position="67"/>
    </location>
</feature>
<feature type="short sequence motif" description="'KMSKS' region">
    <location>
        <begin position="593"/>
        <end position="597"/>
    </location>
</feature>
<feature type="binding site" evidence="1">
    <location>
        <position position="552"/>
    </location>
    <ligand>
        <name>L-isoleucyl-5'-AMP</name>
        <dbReference type="ChEBI" id="CHEBI:178002"/>
    </ligand>
</feature>
<feature type="binding site" evidence="1">
    <location>
        <position position="596"/>
    </location>
    <ligand>
        <name>ATP</name>
        <dbReference type="ChEBI" id="CHEBI:30616"/>
    </ligand>
</feature>
<feature type="binding site" evidence="1">
    <location>
        <position position="886"/>
    </location>
    <ligand>
        <name>Zn(2+)</name>
        <dbReference type="ChEBI" id="CHEBI:29105"/>
    </ligand>
</feature>
<feature type="binding site" evidence="1">
    <location>
        <position position="889"/>
    </location>
    <ligand>
        <name>Zn(2+)</name>
        <dbReference type="ChEBI" id="CHEBI:29105"/>
    </ligand>
</feature>
<feature type="binding site" evidence="1">
    <location>
        <position position="906"/>
    </location>
    <ligand>
        <name>Zn(2+)</name>
        <dbReference type="ChEBI" id="CHEBI:29105"/>
    </ligand>
</feature>
<feature type="binding site" evidence="1">
    <location>
        <position position="909"/>
    </location>
    <ligand>
        <name>Zn(2+)</name>
        <dbReference type="ChEBI" id="CHEBI:29105"/>
    </ligand>
</feature>
<evidence type="ECO:0000255" key="1">
    <source>
        <dbReference type="HAMAP-Rule" id="MF_02002"/>
    </source>
</evidence>
<sequence>MDYKDTINLPKTSFKMKANLKEKEPQILQKWEDINIAYYLRNIRIGGTKFVLHDGPPYANGDIHMGTALNKVLKDIVLKYKTLRGYDAPYVPGWDTHGLPIEHNVTTKLGEKANALSKLEIRKLCEDYAMKYVDIQRESFKRLGVIGFWDKPYLTLKPEYEAKVLEILRSIVESGNIYRGTKPIYWCTECQTALAEAEVEYHDHTSDSIYVKFPLVGENNTYVIIWTTTPWTLPANVAIAVHPNFDYAKVEIGNEYWIMAKELVDKTLKEAGIDDYKIIDTFKGLTLEGEKARHPFVDRESLLVLADYVTLDEGTGCVHTAPGHGMEDYITGTKYNLQVISPVDSQGYFTDEAGKYKGMKIWEANKEIIKDLKENGFLVQSGKITHSYPHCWRCKNPVIFRATPQWFIDLEKNNYREKVLEEIKKVNWIPKWGENRISSMVRERPDWVISRQRAWGIPIPAIKCENCGETILDTKIIDHVIEIIEKEGSNAWFEKEAKELLPNDYRCPKCGGSEFKKEEDILDVWIDSGSSFEAVANSREELKKFPVDLYLEGSDQHRGWFQSSIFLSVAKHGIAPYESVLTHGFIKDEEGKKMSKSLGNVVNPKDIINKYGADILRLWVASADYRMDIKISYNILEQQVETYRKLRNTIRFLLGNINDFDPDEDSVAYEEMLEIDQWALMKLHNLIKNVTKAYDNYEFYKVHYLINNFCTIDMSSTYLDIIKDRIYVEGKKSKLRRSAQTVLYETAIALNKMISPILPFTAEEVYEHLNYSNKYETIFAELWPEYKENYLSEELEEKWNKIFALREDVLKALEEKRKEKFLGNSLDAKIILNLKDDTLKQILSQYDNNWIADLFIVSQFEFGNVDEGFEGRYATIKVTKAEGEKCERCWKVDPNTDNDPDFPGVCPRCARVLKEEINA</sequence>
<dbReference type="EC" id="6.1.1.5" evidence="1"/>
<dbReference type="EMBL" id="CP000879">
    <property type="protein sequence ID" value="ABX32320.1"/>
    <property type="molecule type" value="Genomic_DNA"/>
</dbReference>
<dbReference type="RefSeq" id="WP_012209417.1">
    <property type="nucleotide sequence ID" value="NC_010003.1"/>
</dbReference>
<dbReference type="SMR" id="A9BI29"/>
<dbReference type="STRING" id="403833.Pmob_1626"/>
<dbReference type="KEGG" id="pmo:Pmob_1626"/>
<dbReference type="eggNOG" id="COG0060">
    <property type="taxonomic scope" value="Bacteria"/>
</dbReference>
<dbReference type="HOGENOM" id="CLU_001493_7_0_0"/>
<dbReference type="OrthoDB" id="9810365at2"/>
<dbReference type="Proteomes" id="UP000000789">
    <property type="component" value="Chromosome"/>
</dbReference>
<dbReference type="GO" id="GO:0005829">
    <property type="term" value="C:cytosol"/>
    <property type="evidence" value="ECO:0007669"/>
    <property type="project" value="TreeGrafter"/>
</dbReference>
<dbReference type="GO" id="GO:0002161">
    <property type="term" value="F:aminoacyl-tRNA deacylase activity"/>
    <property type="evidence" value="ECO:0007669"/>
    <property type="project" value="InterPro"/>
</dbReference>
<dbReference type="GO" id="GO:0005524">
    <property type="term" value="F:ATP binding"/>
    <property type="evidence" value="ECO:0007669"/>
    <property type="project" value="UniProtKB-UniRule"/>
</dbReference>
<dbReference type="GO" id="GO:0004822">
    <property type="term" value="F:isoleucine-tRNA ligase activity"/>
    <property type="evidence" value="ECO:0007669"/>
    <property type="project" value="UniProtKB-UniRule"/>
</dbReference>
<dbReference type="GO" id="GO:0000049">
    <property type="term" value="F:tRNA binding"/>
    <property type="evidence" value="ECO:0007669"/>
    <property type="project" value="InterPro"/>
</dbReference>
<dbReference type="GO" id="GO:0008270">
    <property type="term" value="F:zinc ion binding"/>
    <property type="evidence" value="ECO:0007669"/>
    <property type="project" value="UniProtKB-UniRule"/>
</dbReference>
<dbReference type="GO" id="GO:0006428">
    <property type="term" value="P:isoleucyl-tRNA aminoacylation"/>
    <property type="evidence" value="ECO:0007669"/>
    <property type="project" value="UniProtKB-UniRule"/>
</dbReference>
<dbReference type="CDD" id="cd07960">
    <property type="entry name" value="Anticodon_Ia_Ile_BEm"/>
    <property type="match status" value="1"/>
</dbReference>
<dbReference type="CDD" id="cd00818">
    <property type="entry name" value="IleRS_core"/>
    <property type="match status" value="1"/>
</dbReference>
<dbReference type="FunFam" id="1.10.730.20:FF:000001">
    <property type="entry name" value="Isoleucine--tRNA ligase"/>
    <property type="match status" value="1"/>
</dbReference>
<dbReference type="FunFam" id="3.40.50.620:FF:000152">
    <property type="entry name" value="Isoleucine--tRNA ligase"/>
    <property type="match status" value="1"/>
</dbReference>
<dbReference type="Gene3D" id="1.10.730.20">
    <property type="match status" value="1"/>
</dbReference>
<dbReference type="Gene3D" id="2.170.220.10">
    <property type="match status" value="1"/>
</dbReference>
<dbReference type="Gene3D" id="3.40.50.620">
    <property type="entry name" value="HUPs"/>
    <property type="match status" value="2"/>
</dbReference>
<dbReference type="Gene3D" id="1.10.10.830">
    <property type="entry name" value="Ile-tRNA synthetase CP2 domain-like"/>
    <property type="match status" value="1"/>
</dbReference>
<dbReference type="Gene3D" id="3.90.740.10">
    <property type="entry name" value="Valyl/Leucyl/Isoleucyl-tRNA synthetase, editing domain"/>
    <property type="match status" value="1"/>
</dbReference>
<dbReference type="HAMAP" id="MF_02002">
    <property type="entry name" value="Ile_tRNA_synth_type1"/>
    <property type="match status" value="1"/>
</dbReference>
<dbReference type="InterPro" id="IPR001412">
    <property type="entry name" value="aa-tRNA-synth_I_CS"/>
</dbReference>
<dbReference type="InterPro" id="IPR002300">
    <property type="entry name" value="aa-tRNA-synth_Ia"/>
</dbReference>
<dbReference type="InterPro" id="IPR033708">
    <property type="entry name" value="Anticodon_Ile_BEm"/>
</dbReference>
<dbReference type="InterPro" id="IPR002301">
    <property type="entry name" value="Ile-tRNA-ligase"/>
</dbReference>
<dbReference type="InterPro" id="IPR023585">
    <property type="entry name" value="Ile-tRNA-ligase_type1"/>
</dbReference>
<dbReference type="InterPro" id="IPR050081">
    <property type="entry name" value="Ile-tRNA_ligase"/>
</dbReference>
<dbReference type="InterPro" id="IPR013155">
    <property type="entry name" value="M/V/L/I-tRNA-synth_anticd-bd"/>
</dbReference>
<dbReference type="InterPro" id="IPR014729">
    <property type="entry name" value="Rossmann-like_a/b/a_fold"/>
</dbReference>
<dbReference type="InterPro" id="IPR009080">
    <property type="entry name" value="tRNAsynth_Ia_anticodon-bd"/>
</dbReference>
<dbReference type="InterPro" id="IPR009008">
    <property type="entry name" value="Val/Leu/Ile-tRNA-synth_edit"/>
</dbReference>
<dbReference type="InterPro" id="IPR010663">
    <property type="entry name" value="Znf_FPG/IleRS"/>
</dbReference>
<dbReference type="NCBIfam" id="TIGR00392">
    <property type="entry name" value="ileS"/>
    <property type="match status" value="1"/>
</dbReference>
<dbReference type="PANTHER" id="PTHR42765:SF1">
    <property type="entry name" value="ISOLEUCINE--TRNA LIGASE, MITOCHONDRIAL"/>
    <property type="match status" value="1"/>
</dbReference>
<dbReference type="PANTHER" id="PTHR42765">
    <property type="entry name" value="SOLEUCYL-TRNA SYNTHETASE"/>
    <property type="match status" value="1"/>
</dbReference>
<dbReference type="Pfam" id="PF08264">
    <property type="entry name" value="Anticodon_1"/>
    <property type="match status" value="1"/>
</dbReference>
<dbReference type="Pfam" id="PF00133">
    <property type="entry name" value="tRNA-synt_1"/>
    <property type="match status" value="1"/>
</dbReference>
<dbReference type="Pfam" id="PF06827">
    <property type="entry name" value="zf-FPG_IleRS"/>
    <property type="match status" value="1"/>
</dbReference>
<dbReference type="PRINTS" id="PR00984">
    <property type="entry name" value="TRNASYNTHILE"/>
</dbReference>
<dbReference type="SUPFAM" id="SSF47323">
    <property type="entry name" value="Anticodon-binding domain of a subclass of class I aminoacyl-tRNA synthetases"/>
    <property type="match status" value="1"/>
</dbReference>
<dbReference type="SUPFAM" id="SSF52374">
    <property type="entry name" value="Nucleotidylyl transferase"/>
    <property type="match status" value="1"/>
</dbReference>
<dbReference type="SUPFAM" id="SSF50677">
    <property type="entry name" value="ValRS/IleRS/LeuRS editing domain"/>
    <property type="match status" value="1"/>
</dbReference>
<dbReference type="PROSITE" id="PS00178">
    <property type="entry name" value="AA_TRNA_LIGASE_I"/>
    <property type="match status" value="1"/>
</dbReference>